<proteinExistence type="inferred from homology"/>
<sequence>MRKIIHVDMDCFFAAVEMRDDPRLRDIPLAIGGSKERRGVISTANYPARRYGVRSAMPTAMAFKLCPQLTLLPGRMAAYKEASQHIREIFARYTPLIEPLSLDEAYLDVSDSLACGGSATLIAQEIRQSIASELNLTASAGIAPIKFLAKIASELNKPNGQYVITPNQIQPFLQDLPLSKIPGVGAVTAKRLQALGLVTCGDIQKYPLAELLKHFGKFGRVLWERSHGIDEREISPDRLRKSVGVEKTLAEDIYDWESCEALIEELYLELETRLRKVKPSLHIARQGVKLKFHDFQQTTQEHTWPVLNKVDLLEIAHAAWHERRAERGVRLVGLHVTLLDPQLERQLLLDWG</sequence>
<organism>
    <name type="scientific">Yersinia pestis bv. Antiqua (strain Nepal516)</name>
    <dbReference type="NCBI Taxonomy" id="377628"/>
    <lineage>
        <taxon>Bacteria</taxon>
        <taxon>Pseudomonadati</taxon>
        <taxon>Pseudomonadota</taxon>
        <taxon>Gammaproteobacteria</taxon>
        <taxon>Enterobacterales</taxon>
        <taxon>Yersiniaceae</taxon>
        <taxon>Yersinia</taxon>
    </lineage>
</organism>
<dbReference type="EC" id="2.7.7.7" evidence="1"/>
<dbReference type="EMBL" id="CP000305">
    <property type="protein sequence ID" value="ABG17196.1"/>
    <property type="molecule type" value="Genomic_DNA"/>
</dbReference>
<dbReference type="EMBL" id="ACNQ01000008">
    <property type="protein sequence ID" value="EEO77274.1"/>
    <property type="molecule type" value="Genomic_DNA"/>
</dbReference>
<dbReference type="RefSeq" id="WP_002208708.1">
    <property type="nucleotide sequence ID" value="NZ_ACNQ01000008.1"/>
</dbReference>
<dbReference type="SMR" id="Q1CLD4"/>
<dbReference type="GeneID" id="57975488"/>
<dbReference type="KEGG" id="ypn:YPN_0864"/>
<dbReference type="HOGENOM" id="CLU_012348_1_2_6"/>
<dbReference type="Proteomes" id="UP000008936">
    <property type="component" value="Chromosome"/>
</dbReference>
<dbReference type="GO" id="GO:0005829">
    <property type="term" value="C:cytosol"/>
    <property type="evidence" value="ECO:0007669"/>
    <property type="project" value="TreeGrafter"/>
</dbReference>
<dbReference type="GO" id="GO:0003684">
    <property type="term" value="F:damaged DNA binding"/>
    <property type="evidence" value="ECO:0007669"/>
    <property type="project" value="InterPro"/>
</dbReference>
<dbReference type="GO" id="GO:0003887">
    <property type="term" value="F:DNA-directed DNA polymerase activity"/>
    <property type="evidence" value="ECO:0007669"/>
    <property type="project" value="UniProtKB-UniRule"/>
</dbReference>
<dbReference type="GO" id="GO:0000287">
    <property type="term" value="F:magnesium ion binding"/>
    <property type="evidence" value="ECO:0007669"/>
    <property type="project" value="UniProtKB-UniRule"/>
</dbReference>
<dbReference type="GO" id="GO:0006261">
    <property type="term" value="P:DNA-templated DNA replication"/>
    <property type="evidence" value="ECO:0007669"/>
    <property type="project" value="UniProtKB-UniRule"/>
</dbReference>
<dbReference type="GO" id="GO:0042276">
    <property type="term" value="P:error-prone translesion synthesis"/>
    <property type="evidence" value="ECO:0007669"/>
    <property type="project" value="TreeGrafter"/>
</dbReference>
<dbReference type="GO" id="GO:0009432">
    <property type="term" value="P:SOS response"/>
    <property type="evidence" value="ECO:0007669"/>
    <property type="project" value="TreeGrafter"/>
</dbReference>
<dbReference type="CDD" id="cd03586">
    <property type="entry name" value="PolY_Pol_IV_kappa"/>
    <property type="match status" value="1"/>
</dbReference>
<dbReference type="FunFam" id="1.10.150.20:FF:000019">
    <property type="entry name" value="DNA polymerase IV"/>
    <property type="match status" value="1"/>
</dbReference>
<dbReference type="FunFam" id="3.30.1490.100:FF:000002">
    <property type="entry name" value="DNA polymerase IV"/>
    <property type="match status" value="1"/>
</dbReference>
<dbReference type="FunFam" id="3.30.70.270:FF:000002">
    <property type="entry name" value="DNA polymerase IV"/>
    <property type="match status" value="1"/>
</dbReference>
<dbReference type="FunFam" id="3.40.1170.60:FF:000001">
    <property type="entry name" value="DNA polymerase IV"/>
    <property type="match status" value="1"/>
</dbReference>
<dbReference type="Gene3D" id="3.30.70.270">
    <property type="match status" value="1"/>
</dbReference>
<dbReference type="Gene3D" id="3.40.1170.60">
    <property type="match status" value="1"/>
</dbReference>
<dbReference type="Gene3D" id="1.10.150.20">
    <property type="entry name" value="5' to 3' exonuclease, C-terminal subdomain"/>
    <property type="match status" value="1"/>
</dbReference>
<dbReference type="Gene3D" id="3.30.1490.100">
    <property type="entry name" value="DNA polymerase, Y-family, little finger domain"/>
    <property type="match status" value="1"/>
</dbReference>
<dbReference type="HAMAP" id="MF_01113">
    <property type="entry name" value="DNApol_IV"/>
    <property type="match status" value="1"/>
</dbReference>
<dbReference type="InterPro" id="IPR043502">
    <property type="entry name" value="DNA/RNA_pol_sf"/>
</dbReference>
<dbReference type="InterPro" id="IPR036775">
    <property type="entry name" value="DNA_pol_Y-fam_lit_finger_sf"/>
</dbReference>
<dbReference type="InterPro" id="IPR017961">
    <property type="entry name" value="DNA_pol_Y-fam_little_finger"/>
</dbReference>
<dbReference type="InterPro" id="IPR050116">
    <property type="entry name" value="DNA_polymerase-Y"/>
</dbReference>
<dbReference type="InterPro" id="IPR022880">
    <property type="entry name" value="DNApol_IV"/>
</dbReference>
<dbReference type="InterPro" id="IPR053848">
    <property type="entry name" value="IMS_HHH_1"/>
</dbReference>
<dbReference type="InterPro" id="IPR043128">
    <property type="entry name" value="Rev_trsase/Diguanyl_cyclase"/>
</dbReference>
<dbReference type="InterPro" id="IPR001126">
    <property type="entry name" value="UmuC"/>
</dbReference>
<dbReference type="NCBIfam" id="NF002677">
    <property type="entry name" value="PRK02406.1"/>
    <property type="match status" value="1"/>
</dbReference>
<dbReference type="PANTHER" id="PTHR11076:SF33">
    <property type="entry name" value="DNA POLYMERASE KAPPA"/>
    <property type="match status" value="1"/>
</dbReference>
<dbReference type="PANTHER" id="PTHR11076">
    <property type="entry name" value="DNA REPAIR POLYMERASE UMUC / TRANSFERASE FAMILY MEMBER"/>
    <property type="match status" value="1"/>
</dbReference>
<dbReference type="Pfam" id="PF00817">
    <property type="entry name" value="IMS"/>
    <property type="match status" value="1"/>
</dbReference>
<dbReference type="Pfam" id="PF11799">
    <property type="entry name" value="IMS_C"/>
    <property type="match status" value="1"/>
</dbReference>
<dbReference type="Pfam" id="PF21999">
    <property type="entry name" value="IMS_HHH_1"/>
    <property type="match status" value="1"/>
</dbReference>
<dbReference type="SUPFAM" id="SSF56672">
    <property type="entry name" value="DNA/RNA polymerases"/>
    <property type="match status" value="1"/>
</dbReference>
<dbReference type="SUPFAM" id="SSF100879">
    <property type="entry name" value="Lesion bypass DNA polymerase (Y-family), little finger domain"/>
    <property type="match status" value="1"/>
</dbReference>
<dbReference type="PROSITE" id="PS50173">
    <property type="entry name" value="UMUC"/>
    <property type="match status" value="1"/>
</dbReference>
<feature type="chain" id="PRO_1000084974" description="DNA polymerase IV">
    <location>
        <begin position="1"/>
        <end position="352"/>
    </location>
</feature>
<feature type="domain" description="UmuC" evidence="1">
    <location>
        <begin position="4"/>
        <end position="185"/>
    </location>
</feature>
<feature type="active site" evidence="1">
    <location>
        <position position="104"/>
    </location>
</feature>
<feature type="binding site" evidence="1">
    <location>
        <position position="8"/>
    </location>
    <ligand>
        <name>Mg(2+)</name>
        <dbReference type="ChEBI" id="CHEBI:18420"/>
    </ligand>
</feature>
<feature type="binding site" evidence="1">
    <location>
        <position position="103"/>
    </location>
    <ligand>
        <name>Mg(2+)</name>
        <dbReference type="ChEBI" id="CHEBI:18420"/>
    </ligand>
</feature>
<feature type="site" description="Substrate discrimination" evidence="1">
    <location>
        <position position="13"/>
    </location>
</feature>
<evidence type="ECO:0000255" key="1">
    <source>
        <dbReference type="HAMAP-Rule" id="MF_01113"/>
    </source>
</evidence>
<reference key="1">
    <citation type="journal article" date="2006" name="J. Bacteriol.">
        <title>Complete genome sequence of Yersinia pestis strains Antiqua and Nepal516: evidence of gene reduction in an emerging pathogen.</title>
        <authorList>
            <person name="Chain P.S.G."/>
            <person name="Hu P."/>
            <person name="Malfatti S.A."/>
            <person name="Radnedge L."/>
            <person name="Larimer F."/>
            <person name="Vergez L.M."/>
            <person name="Worsham P."/>
            <person name="Chu M.C."/>
            <person name="Andersen G.L."/>
        </authorList>
    </citation>
    <scope>NUCLEOTIDE SEQUENCE [LARGE SCALE GENOMIC DNA]</scope>
    <source>
        <strain>Nepal516</strain>
    </source>
</reference>
<reference key="2">
    <citation type="submission" date="2009-04" db="EMBL/GenBank/DDBJ databases">
        <title>Yersinia pestis Nepal516A whole genome shotgun sequencing project.</title>
        <authorList>
            <person name="Plunkett G. III"/>
            <person name="Anderson B.D."/>
            <person name="Baumler D.J."/>
            <person name="Burland V."/>
            <person name="Cabot E.L."/>
            <person name="Glasner J.D."/>
            <person name="Mau B."/>
            <person name="Neeno-Eckwall E."/>
            <person name="Perna N.T."/>
            <person name="Munk A.C."/>
            <person name="Tapia R."/>
            <person name="Green L.D."/>
            <person name="Rogers Y.C."/>
            <person name="Detter J.C."/>
            <person name="Bruce D.C."/>
            <person name="Brettin T.S."/>
        </authorList>
    </citation>
    <scope>NUCLEOTIDE SEQUENCE [LARGE SCALE GENOMIC DNA]</scope>
    <source>
        <strain>Nepal516</strain>
    </source>
</reference>
<gene>
    <name evidence="1" type="primary">dinB</name>
    <name type="ordered locus">YPN_0864</name>
    <name type="ORF">YP516_0933</name>
</gene>
<keyword id="KW-0963">Cytoplasm</keyword>
<keyword id="KW-0227">DNA damage</keyword>
<keyword id="KW-0234">DNA repair</keyword>
<keyword id="KW-0235">DNA replication</keyword>
<keyword id="KW-0238">DNA-binding</keyword>
<keyword id="KW-0239">DNA-directed DNA polymerase</keyword>
<keyword id="KW-0460">Magnesium</keyword>
<keyword id="KW-0479">Metal-binding</keyword>
<keyword id="KW-0515">Mutator protein</keyword>
<keyword id="KW-0548">Nucleotidyltransferase</keyword>
<keyword id="KW-0808">Transferase</keyword>
<name>DPO4_YERPN</name>
<comment type="function">
    <text evidence="1">Poorly processive, error-prone DNA polymerase involved in untargeted mutagenesis. Copies undamaged DNA at stalled replication forks, which arise in vivo from mismatched or misaligned primer ends. These misaligned primers can be extended by PolIV. Exhibits no 3'-5' exonuclease (proofreading) activity. May be involved in translesional synthesis, in conjunction with the beta clamp from PolIII.</text>
</comment>
<comment type="catalytic activity">
    <reaction evidence="1">
        <text>DNA(n) + a 2'-deoxyribonucleoside 5'-triphosphate = DNA(n+1) + diphosphate</text>
        <dbReference type="Rhea" id="RHEA:22508"/>
        <dbReference type="Rhea" id="RHEA-COMP:17339"/>
        <dbReference type="Rhea" id="RHEA-COMP:17340"/>
        <dbReference type="ChEBI" id="CHEBI:33019"/>
        <dbReference type="ChEBI" id="CHEBI:61560"/>
        <dbReference type="ChEBI" id="CHEBI:173112"/>
        <dbReference type="EC" id="2.7.7.7"/>
    </reaction>
</comment>
<comment type="cofactor">
    <cofactor evidence="1">
        <name>Mg(2+)</name>
        <dbReference type="ChEBI" id="CHEBI:18420"/>
    </cofactor>
    <text evidence="1">Binds 2 magnesium ions per subunit.</text>
</comment>
<comment type="subunit">
    <text evidence="1">Monomer.</text>
</comment>
<comment type="subcellular location">
    <subcellularLocation>
        <location evidence="1">Cytoplasm</location>
    </subcellularLocation>
</comment>
<comment type="similarity">
    <text evidence="1">Belongs to the DNA polymerase type-Y family.</text>
</comment>
<accession>Q1CLD4</accession>
<accession>C4GQD3</accession>
<protein>
    <recommendedName>
        <fullName evidence="1">DNA polymerase IV</fullName>
        <shortName evidence="1">Pol IV</shortName>
        <ecNumber evidence="1">2.7.7.7</ecNumber>
    </recommendedName>
</protein>